<feature type="chain" id="PRO_0000263182" description="Aspartate/glutamate leucyltransferase">
    <location>
        <begin position="1"/>
        <end position="247"/>
    </location>
</feature>
<reference key="1">
    <citation type="journal article" date="2011" name="Stand. Genomic Sci.">
        <title>Complete genome sequence of the halophilic and highly halotolerant Chromohalobacter salexigens type strain (1H11(T)).</title>
        <authorList>
            <person name="Copeland A."/>
            <person name="O'Connor K."/>
            <person name="Lucas S."/>
            <person name="Lapidus A."/>
            <person name="Berry K.W."/>
            <person name="Detter J.C."/>
            <person name="Del Rio T.G."/>
            <person name="Hammon N."/>
            <person name="Dalin E."/>
            <person name="Tice H."/>
            <person name="Pitluck S."/>
            <person name="Bruce D."/>
            <person name="Goodwin L."/>
            <person name="Han C."/>
            <person name="Tapia R."/>
            <person name="Saunders E."/>
            <person name="Schmutz J."/>
            <person name="Brettin T."/>
            <person name="Larimer F."/>
            <person name="Land M."/>
            <person name="Hauser L."/>
            <person name="Vargas C."/>
            <person name="Nieto J.J."/>
            <person name="Kyrpides N.C."/>
            <person name="Ivanova N."/>
            <person name="Goker M."/>
            <person name="Klenk H.P."/>
            <person name="Csonka L.N."/>
            <person name="Woyke T."/>
        </authorList>
    </citation>
    <scope>NUCLEOTIDE SEQUENCE [LARGE SCALE GENOMIC DNA]</scope>
    <source>
        <strain>ATCC BAA-138 / DSM 3043 / CIP 106854 / NCIMB 13768 / 1H11</strain>
    </source>
</reference>
<gene>
    <name evidence="1" type="primary">bpt</name>
    <name type="ordered locus">Csal_2438</name>
</gene>
<protein>
    <recommendedName>
        <fullName evidence="1">Aspartate/glutamate leucyltransferase</fullName>
        <ecNumber evidence="1">2.3.2.29</ecNumber>
    </recommendedName>
</protein>
<organism>
    <name type="scientific">Chromohalobacter salexigens (strain ATCC BAA-138 / DSM 3043 / CIP 106854 / NCIMB 13768 / 1H11)</name>
    <dbReference type="NCBI Taxonomy" id="290398"/>
    <lineage>
        <taxon>Bacteria</taxon>
        <taxon>Pseudomonadati</taxon>
        <taxon>Pseudomonadota</taxon>
        <taxon>Gammaproteobacteria</taxon>
        <taxon>Oceanospirillales</taxon>
        <taxon>Halomonadaceae</taxon>
        <taxon>Chromohalobacter</taxon>
    </lineage>
</organism>
<proteinExistence type="inferred from homology"/>
<comment type="function">
    <text evidence="1">Functions in the N-end rule pathway of protein degradation where it conjugates Leu from its aminoacyl-tRNA to the N-termini of proteins containing an N-terminal aspartate or glutamate.</text>
</comment>
<comment type="catalytic activity">
    <reaction evidence="1">
        <text>N-terminal L-glutamyl-[protein] + L-leucyl-tRNA(Leu) = N-terminal L-leucyl-L-glutamyl-[protein] + tRNA(Leu) + H(+)</text>
        <dbReference type="Rhea" id="RHEA:50412"/>
        <dbReference type="Rhea" id="RHEA-COMP:9613"/>
        <dbReference type="Rhea" id="RHEA-COMP:9622"/>
        <dbReference type="Rhea" id="RHEA-COMP:12664"/>
        <dbReference type="Rhea" id="RHEA-COMP:12668"/>
        <dbReference type="ChEBI" id="CHEBI:15378"/>
        <dbReference type="ChEBI" id="CHEBI:64721"/>
        <dbReference type="ChEBI" id="CHEBI:78442"/>
        <dbReference type="ChEBI" id="CHEBI:78494"/>
        <dbReference type="ChEBI" id="CHEBI:133041"/>
        <dbReference type="EC" id="2.3.2.29"/>
    </reaction>
</comment>
<comment type="catalytic activity">
    <reaction evidence="1">
        <text>N-terminal L-aspartyl-[protein] + L-leucyl-tRNA(Leu) = N-terminal L-leucyl-L-aspartyl-[protein] + tRNA(Leu) + H(+)</text>
        <dbReference type="Rhea" id="RHEA:50420"/>
        <dbReference type="Rhea" id="RHEA-COMP:9613"/>
        <dbReference type="Rhea" id="RHEA-COMP:9622"/>
        <dbReference type="Rhea" id="RHEA-COMP:12669"/>
        <dbReference type="Rhea" id="RHEA-COMP:12674"/>
        <dbReference type="ChEBI" id="CHEBI:15378"/>
        <dbReference type="ChEBI" id="CHEBI:64720"/>
        <dbReference type="ChEBI" id="CHEBI:78442"/>
        <dbReference type="ChEBI" id="CHEBI:78494"/>
        <dbReference type="ChEBI" id="CHEBI:133042"/>
        <dbReference type="EC" id="2.3.2.29"/>
    </reaction>
</comment>
<comment type="subcellular location">
    <subcellularLocation>
        <location evidence="1">Cytoplasm</location>
    </subcellularLocation>
</comment>
<comment type="similarity">
    <text evidence="1">Belongs to the R-transferase family. Bpt subfamily.</text>
</comment>
<dbReference type="EC" id="2.3.2.29" evidence="1"/>
<dbReference type="EMBL" id="CP000285">
    <property type="protein sequence ID" value="ABE59785.1"/>
    <property type="molecule type" value="Genomic_DNA"/>
</dbReference>
<dbReference type="RefSeq" id="WP_011507731.1">
    <property type="nucleotide sequence ID" value="NC_007963.1"/>
</dbReference>
<dbReference type="SMR" id="Q1QUS3"/>
<dbReference type="STRING" id="290398.Csal_2438"/>
<dbReference type="GeneID" id="95335144"/>
<dbReference type="KEGG" id="csa:Csal_2438"/>
<dbReference type="eggNOG" id="COG2935">
    <property type="taxonomic scope" value="Bacteria"/>
</dbReference>
<dbReference type="HOGENOM" id="CLU_077607_0_0_6"/>
<dbReference type="OrthoDB" id="9782022at2"/>
<dbReference type="Proteomes" id="UP000000239">
    <property type="component" value="Chromosome"/>
</dbReference>
<dbReference type="GO" id="GO:0005737">
    <property type="term" value="C:cytoplasm"/>
    <property type="evidence" value="ECO:0007669"/>
    <property type="project" value="UniProtKB-SubCell"/>
</dbReference>
<dbReference type="GO" id="GO:0004057">
    <property type="term" value="F:arginyl-tRNA--protein transferase activity"/>
    <property type="evidence" value="ECO:0007669"/>
    <property type="project" value="InterPro"/>
</dbReference>
<dbReference type="GO" id="GO:0008914">
    <property type="term" value="F:leucyl-tRNA--protein transferase activity"/>
    <property type="evidence" value="ECO:0007669"/>
    <property type="project" value="UniProtKB-UniRule"/>
</dbReference>
<dbReference type="GO" id="GO:0071596">
    <property type="term" value="P:ubiquitin-dependent protein catabolic process via the N-end rule pathway"/>
    <property type="evidence" value="ECO:0007669"/>
    <property type="project" value="InterPro"/>
</dbReference>
<dbReference type="Gene3D" id="3.40.630.30">
    <property type="match status" value="1"/>
</dbReference>
<dbReference type="HAMAP" id="MF_00689">
    <property type="entry name" value="Bpt"/>
    <property type="match status" value="1"/>
</dbReference>
<dbReference type="InterPro" id="IPR016181">
    <property type="entry name" value="Acyl_CoA_acyltransferase"/>
</dbReference>
<dbReference type="InterPro" id="IPR017138">
    <property type="entry name" value="Asp_Glu_LeuTrfase"/>
</dbReference>
<dbReference type="InterPro" id="IPR030700">
    <property type="entry name" value="N-end_Aminoacyl_Trfase"/>
</dbReference>
<dbReference type="InterPro" id="IPR007472">
    <property type="entry name" value="N-end_Aminoacyl_Trfase_C"/>
</dbReference>
<dbReference type="InterPro" id="IPR007471">
    <property type="entry name" value="N-end_Aminoacyl_Trfase_N"/>
</dbReference>
<dbReference type="NCBIfam" id="NF002341">
    <property type="entry name" value="PRK01305.1-1"/>
    <property type="match status" value="1"/>
</dbReference>
<dbReference type="NCBIfam" id="NF002342">
    <property type="entry name" value="PRK01305.1-3"/>
    <property type="match status" value="1"/>
</dbReference>
<dbReference type="NCBIfam" id="NF002346">
    <property type="entry name" value="PRK01305.2-3"/>
    <property type="match status" value="1"/>
</dbReference>
<dbReference type="PANTHER" id="PTHR21367">
    <property type="entry name" value="ARGININE-TRNA-PROTEIN TRANSFERASE 1"/>
    <property type="match status" value="1"/>
</dbReference>
<dbReference type="PANTHER" id="PTHR21367:SF1">
    <property type="entry name" value="ARGINYL-TRNA--PROTEIN TRANSFERASE 1"/>
    <property type="match status" value="1"/>
</dbReference>
<dbReference type="Pfam" id="PF04377">
    <property type="entry name" value="ATE_C"/>
    <property type="match status" value="1"/>
</dbReference>
<dbReference type="Pfam" id="PF04376">
    <property type="entry name" value="ATE_N"/>
    <property type="match status" value="1"/>
</dbReference>
<dbReference type="PIRSF" id="PIRSF037208">
    <property type="entry name" value="ATE_pro_prd"/>
    <property type="match status" value="1"/>
</dbReference>
<dbReference type="SUPFAM" id="SSF55729">
    <property type="entry name" value="Acyl-CoA N-acyltransferases (Nat)"/>
    <property type="match status" value="1"/>
</dbReference>
<name>BPT_CHRSD</name>
<accession>Q1QUS3</accession>
<sequence>MSSNTPSQLTRDLRFFLTVPHGCSYLPDREATTLFLDPQEQPGQGVYDALALLGFRRSGRHLYRPHCEGCRACISVRIPVEDFTPKRTQRKLISRNVDLETRMLPAAFYEEHYALYARYIRTRHADGDMYPPSHEQYRTFLTLDHPYARLIEFRLQGQLLGVAATDLLSHGVSAIYTFFDPSPAFERRSLGTYAILHQIELARRLGRPHVYLGYWIRQCRKMSYKQDFEPLEYLDGRHWRRQIPLVE</sequence>
<evidence type="ECO:0000255" key="1">
    <source>
        <dbReference type="HAMAP-Rule" id="MF_00689"/>
    </source>
</evidence>
<keyword id="KW-0012">Acyltransferase</keyword>
<keyword id="KW-0963">Cytoplasm</keyword>
<keyword id="KW-1185">Reference proteome</keyword>
<keyword id="KW-0808">Transferase</keyword>